<reference key="1">
    <citation type="journal article" date="1994" name="Eur. J. Biochem.">
        <title>DNA replication in vitro by recombinant DNA-polymerase-alpha-primase.</title>
        <authorList>
            <person name="Stadlbauer F."/>
            <person name="Brueckner A."/>
            <person name="Rehfuess C."/>
            <person name="Eckerskorn C."/>
            <person name="Lottspeich F."/>
            <person name="Foerster V."/>
            <person name="Tseng B.Y."/>
            <person name="Nasheuer H.-P."/>
        </authorList>
    </citation>
    <scope>NUCLEOTIDE SEQUENCE [MRNA] (ISOFORM 1)</scope>
</reference>
<reference key="2">
    <citation type="journal article" date="2003" name="Nature">
        <title>The DNA sequence and analysis of human chromosome 6.</title>
        <authorList>
            <person name="Mungall A.J."/>
            <person name="Palmer S.A."/>
            <person name="Sims S.K."/>
            <person name="Edwards C.A."/>
            <person name="Ashurst J.L."/>
            <person name="Wilming L."/>
            <person name="Jones M.C."/>
            <person name="Horton R."/>
            <person name="Hunt S.E."/>
            <person name="Scott C.E."/>
            <person name="Gilbert J.G.R."/>
            <person name="Clamp M.E."/>
            <person name="Bethel G."/>
            <person name="Milne S."/>
            <person name="Ainscough R."/>
            <person name="Almeida J.P."/>
            <person name="Ambrose K.D."/>
            <person name="Andrews T.D."/>
            <person name="Ashwell R.I.S."/>
            <person name="Babbage A.K."/>
            <person name="Bagguley C.L."/>
            <person name="Bailey J."/>
            <person name="Banerjee R."/>
            <person name="Barker D.J."/>
            <person name="Barlow K.F."/>
            <person name="Bates K."/>
            <person name="Beare D.M."/>
            <person name="Beasley H."/>
            <person name="Beasley O."/>
            <person name="Bird C.P."/>
            <person name="Blakey S.E."/>
            <person name="Bray-Allen S."/>
            <person name="Brook J."/>
            <person name="Brown A.J."/>
            <person name="Brown J.Y."/>
            <person name="Burford D.C."/>
            <person name="Burrill W."/>
            <person name="Burton J."/>
            <person name="Carder C."/>
            <person name="Carter N.P."/>
            <person name="Chapman J.C."/>
            <person name="Clark S.Y."/>
            <person name="Clark G."/>
            <person name="Clee C.M."/>
            <person name="Clegg S."/>
            <person name="Cobley V."/>
            <person name="Collier R.E."/>
            <person name="Collins J.E."/>
            <person name="Colman L.K."/>
            <person name="Corby N.R."/>
            <person name="Coville G.J."/>
            <person name="Culley K.M."/>
            <person name="Dhami P."/>
            <person name="Davies J."/>
            <person name="Dunn M."/>
            <person name="Earthrowl M.E."/>
            <person name="Ellington A.E."/>
            <person name="Evans K.A."/>
            <person name="Faulkner L."/>
            <person name="Francis M.D."/>
            <person name="Frankish A."/>
            <person name="Frankland J."/>
            <person name="French L."/>
            <person name="Garner P."/>
            <person name="Garnett J."/>
            <person name="Ghori M.J."/>
            <person name="Gilby L.M."/>
            <person name="Gillson C.J."/>
            <person name="Glithero R.J."/>
            <person name="Grafham D.V."/>
            <person name="Grant M."/>
            <person name="Gribble S."/>
            <person name="Griffiths C."/>
            <person name="Griffiths M.N.D."/>
            <person name="Hall R."/>
            <person name="Halls K.S."/>
            <person name="Hammond S."/>
            <person name="Harley J.L."/>
            <person name="Hart E.A."/>
            <person name="Heath P.D."/>
            <person name="Heathcott R."/>
            <person name="Holmes S.J."/>
            <person name="Howden P.J."/>
            <person name="Howe K.L."/>
            <person name="Howell G.R."/>
            <person name="Huckle E."/>
            <person name="Humphray S.J."/>
            <person name="Humphries M.D."/>
            <person name="Hunt A.R."/>
            <person name="Johnson C.M."/>
            <person name="Joy A.A."/>
            <person name="Kay M."/>
            <person name="Keenan S.J."/>
            <person name="Kimberley A.M."/>
            <person name="King A."/>
            <person name="Laird G.K."/>
            <person name="Langford C."/>
            <person name="Lawlor S."/>
            <person name="Leongamornlert D.A."/>
            <person name="Leversha M."/>
            <person name="Lloyd C.R."/>
            <person name="Lloyd D.M."/>
            <person name="Loveland J.E."/>
            <person name="Lovell J."/>
            <person name="Martin S."/>
            <person name="Mashreghi-Mohammadi M."/>
            <person name="Maslen G.L."/>
            <person name="Matthews L."/>
            <person name="McCann O.T."/>
            <person name="McLaren S.J."/>
            <person name="McLay K."/>
            <person name="McMurray A."/>
            <person name="Moore M.J.F."/>
            <person name="Mullikin J.C."/>
            <person name="Niblett D."/>
            <person name="Nickerson T."/>
            <person name="Novik K.L."/>
            <person name="Oliver K."/>
            <person name="Overton-Larty E.K."/>
            <person name="Parker A."/>
            <person name="Patel R."/>
            <person name="Pearce A.V."/>
            <person name="Peck A.I."/>
            <person name="Phillimore B.J.C.T."/>
            <person name="Phillips S."/>
            <person name="Plumb R.W."/>
            <person name="Porter K.M."/>
            <person name="Ramsey Y."/>
            <person name="Ranby S.A."/>
            <person name="Rice C.M."/>
            <person name="Ross M.T."/>
            <person name="Searle S.M."/>
            <person name="Sehra H.K."/>
            <person name="Sheridan E."/>
            <person name="Skuce C.D."/>
            <person name="Smith S."/>
            <person name="Smith M."/>
            <person name="Spraggon L."/>
            <person name="Squares S.L."/>
            <person name="Steward C.A."/>
            <person name="Sycamore N."/>
            <person name="Tamlyn-Hall G."/>
            <person name="Tester J."/>
            <person name="Theaker A.J."/>
            <person name="Thomas D.W."/>
            <person name="Thorpe A."/>
            <person name="Tracey A."/>
            <person name="Tromans A."/>
            <person name="Tubby B."/>
            <person name="Wall M."/>
            <person name="Wallis J.M."/>
            <person name="West A.P."/>
            <person name="White S.S."/>
            <person name="Whitehead S.L."/>
            <person name="Whittaker H."/>
            <person name="Wild A."/>
            <person name="Willey D.J."/>
            <person name="Wilmer T.E."/>
            <person name="Wood J.M."/>
            <person name="Wray P.W."/>
            <person name="Wyatt J.C."/>
            <person name="Young L."/>
            <person name="Younger R.M."/>
            <person name="Bentley D.R."/>
            <person name="Coulson A."/>
            <person name="Durbin R.M."/>
            <person name="Hubbard T."/>
            <person name="Sulston J.E."/>
            <person name="Dunham I."/>
            <person name="Rogers J."/>
            <person name="Beck S."/>
        </authorList>
    </citation>
    <scope>NUCLEOTIDE SEQUENCE [LARGE SCALE GENOMIC DNA]</scope>
</reference>
<reference key="3">
    <citation type="journal article" date="2004" name="Genome Res.">
        <title>The status, quality, and expansion of the NIH full-length cDNA project: the Mammalian Gene Collection (MGC).</title>
        <authorList>
            <consortium name="The MGC Project Team"/>
        </authorList>
    </citation>
    <scope>NUCLEOTIDE SEQUENCE [LARGE SCALE MRNA] (ISOFORMS 1 AND 2)</scope>
    <source>
        <tissue>Skin</tissue>
    </source>
</reference>
<reference key="4">
    <citation type="journal article" date="1998" name="J. Biol. Chem.">
        <title>Primase activity of human DNA polymerase alpha-primase. Divalent cations stabilize the enzyme activity of the p48 subunit.</title>
        <authorList>
            <person name="Schneider A."/>
            <person name="Smith R.W."/>
            <person name="Kautz A.R."/>
            <person name="Weisshart K."/>
            <person name="Grosse F."/>
            <person name="Nasheuer H.P."/>
        </authorList>
    </citation>
    <scope>FUNCTION</scope>
    <scope>INTERACTION WITH PRIM1; POLA2 AND POLA1</scope>
</reference>
<reference key="5">
    <citation type="journal article" date="2007" name="J. Biol. Chem.">
        <title>An iron-sulfur cluster in the C-terminal domain of the p58 subunit of human DNA primase.</title>
        <authorList>
            <person name="Weiner B.E."/>
            <person name="Huang H."/>
            <person name="Dattilo B.M."/>
            <person name="Nilges M.J."/>
            <person name="Fanning E."/>
            <person name="Chazin W.J."/>
        </authorList>
    </citation>
    <scope>FUNCTION</scope>
    <scope>IRON-SULFUR CLUSTER</scope>
    <scope>COFACTOR</scope>
    <scope>INTERACTION WITH PRIM1</scope>
    <scope>IDENTIFICATION IN THE DNA PRIMASE COMPLEX</scope>
</reference>
<reference key="6">
    <citation type="journal article" date="2009" name="Anal. Chem.">
        <title>Lys-N and trypsin cover complementary parts of the phosphoproteome in a refined SCX-based approach.</title>
        <authorList>
            <person name="Gauci S."/>
            <person name="Helbig A.O."/>
            <person name="Slijper M."/>
            <person name="Krijgsveld J."/>
            <person name="Heck A.J."/>
            <person name="Mohammed S."/>
        </authorList>
    </citation>
    <scope>IDENTIFICATION BY MASS SPECTROMETRY [LARGE SCALE ANALYSIS]</scope>
</reference>
<reference key="7">
    <citation type="journal article" date="2010" name="Sci. Signal.">
        <title>Quantitative phosphoproteomics reveals widespread full phosphorylation site occupancy during mitosis.</title>
        <authorList>
            <person name="Olsen J.V."/>
            <person name="Vermeulen M."/>
            <person name="Santamaria A."/>
            <person name="Kumar C."/>
            <person name="Miller M.L."/>
            <person name="Jensen L.J."/>
            <person name="Gnad F."/>
            <person name="Cox J."/>
            <person name="Jensen T.S."/>
            <person name="Nigg E.A."/>
            <person name="Brunak S."/>
            <person name="Mann M."/>
        </authorList>
    </citation>
    <scope>IDENTIFICATION BY MASS SPECTROMETRY [LARGE SCALE ANALYSIS]</scope>
    <source>
        <tissue>Cervix carcinoma</tissue>
    </source>
</reference>
<reference key="8">
    <citation type="journal article" date="2011" name="BMC Syst. Biol.">
        <title>Initial characterization of the human central proteome.</title>
        <authorList>
            <person name="Burkard T.R."/>
            <person name="Planyavsky M."/>
            <person name="Kaupe I."/>
            <person name="Breitwieser F.P."/>
            <person name="Buerckstuemmer T."/>
            <person name="Bennett K.L."/>
            <person name="Superti-Furga G."/>
            <person name="Colinge J."/>
        </authorList>
    </citation>
    <scope>IDENTIFICATION BY MASS SPECTROMETRY [LARGE SCALE ANALYSIS]</scope>
</reference>
<reference key="9">
    <citation type="journal article" date="2011" name="Sci. Signal.">
        <title>System-wide temporal characterization of the proteome and phosphoproteome of human embryonic stem cell differentiation.</title>
        <authorList>
            <person name="Rigbolt K.T."/>
            <person name="Prokhorova T.A."/>
            <person name="Akimov V."/>
            <person name="Henningsen J."/>
            <person name="Johansen P.T."/>
            <person name="Kratchmarova I."/>
            <person name="Kassem M."/>
            <person name="Mann M."/>
            <person name="Olsen J.V."/>
            <person name="Blagoev B."/>
        </authorList>
    </citation>
    <scope>IDENTIFICATION BY MASS SPECTROMETRY [LARGE SCALE ANALYSIS]</scope>
</reference>
<reference key="10">
    <citation type="journal article" date="2013" name="J. Proteome Res.">
        <title>Toward a comprehensive characterization of a human cancer cell phosphoproteome.</title>
        <authorList>
            <person name="Zhou H."/>
            <person name="Di Palma S."/>
            <person name="Preisinger C."/>
            <person name="Peng M."/>
            <person name="Polat A.N."/>
            <person name="Heck A.J."/>
            <person name="Mohammed S."/>
        </authorList>
    </citation>
    <scope>PHOSPHORYLATION [LARGE SCALE ANALYSIS] AT THR-470</scope>
    <scope>IDENTIFICATION BY MASS SPECTROMETRY [LARGE SCALE ANALYSIS]</scope>
    <source>
        <tissue>Cervix carcinoma</tissue>
    </source>
</reference>
<reference key="11">
    <citation type="journal article" date="2013" name="Proc. Natl. Acad. Sci. U.S.A.">
        <title>Structures of human primase reveal design of nucleotide elongation site and mode of Pol alpha tethering.</title>
        <authorList>
            <person name="Kilkenny M.L."/>
            <person name="Longo M.A."/>
            <person name="Perera R.L."/>
            <person name="Pellegrini L."/>
        </authorList>
    </citation>
    <scope>X-RAY CRYSTALLOGRAPHY (2.70 ANGSTROMS) OF 1-253</scope>
    <scope>INTERACTION WITH POLA1</scope>
    <scope>MUTAGENESIS OF ARG-97; PHE-104; ARG-107 AND LEU-108</scope>
</reference>
<reference key="12">
    <citation type="journal article" date="2015" name="J. Biol. Chem.">
        <title>Crystal structure of the human primase.</title>
        <authorList>
            <person name="Baranovskiy A.G."/>
            <person name="Zhang Y."/>
            <person name="Suwa Y."/>
            <person name="Babayeva N.D."/>
            <person name="Gu J."/>
            <person name="Pavlov Y.I."/>
            <person name="Tahirov T.H."/>
        </authorList>
    </citation>
    <scope>X-RAY CRYSTALLOGRAPHY (2.65 ANGSTROMS) IN COMPLEX WITH IRON-SULFUR (4FE-4S)</scope>
    <scope>FUNCTION</scope>
    <scope>COFACTOR</scope>
    <scope>DOMAIN</scope>
    <scope>MUTAGENESIS OF 256-SER--LYS-270</scope>
</reference>
<reference key="13">
    <citation type="journal article" date="2016" name="J. Biol. Chem.">
        <title>Mechanism of Concerted RNA-DNA Primer Synthesis by the Human Primosome.</title>
        <authorList>
            <person name="Baranovskiy A.G."/>
            <person name="Babayeva N.D."/>
            <person name="Zhang Y."/>
            <person name="Gu J."/>
            <person name="Suwa Y."/>
            <person name="Pavlov Y.I."/>
            <person name="Tahirov T.H."/>
        </authorList>
    </citation>
    <scope>X-RAY CRYSTALLOGRAPHY (2.21 ANGSTROMS) OF 266-456 IN COMPLEX WITH IRON-SULFUR (4FE-4S)</scope>
    <scope>FUNCTION</scope>
    <scope>SUBUNIT</scope>
    <scope>DOMAIN</scope>
</reference>
<reference key="14">
    <citation type="journal article" date="2009" name="Mol. Cell. Proteomics">
        <title>Large-scale proteomics analysis of the human kinome.</title>
        <authorList>
            <person name="Oppermann F.S."/>
            <person name="Gnad F."/>
            <person name="Olsen J.V."/>
            <person name="Hornberger R."/>
            <person name="Greff Z."/>
            <person name="Keri G."/>
            <person name="Mann M."/>
            <person name="Daub H."/>
        </authorList>
    </citation>
    <scope>VARIANT [LARGE SCALE ANALYSIS] SER-465</scope>
    <scope>IDENTIFICATION BY MASS SPECTROMETRY [LARGE SCALE ANALYSIS]</scope>
</reference>
<accession>P49643</accession>
<accession>Q53FJ8</accession>
<accession>Q6P1Q7</accession>
<accession>Q8WVL2</accession>
<accession>Q9H413</accession>
<gene>
    <name type="primary">PRIM2</name>
    <name type="synonym">PRIM2A</name>
</gene>
<name>PRI2_HUMAN</name>
<evidence type="ECO:0000250" key="1">
    <source>
        <dbReference type="UniProtKB" id="P09884"/>
    </source>
</evidence>
<evidence type="ECO:0000250" key="2">
    <source>
        <dbReference type="UniProtKB" id="P33610"/>
    </source>
</evidence>
<evidence type="ECO:0000256" key="3">
    <source>
        <dbReference type="SAM" id="MobiDB-lite"/>
    </source>
</evidence>
<evidence type="ECO:0000269" key="4">
    <source>
    </source>
</evidence>
<evidence type="ECO:0000269" key="5">
    <source>
    </source>
</evidence>
<evidence type="ECO:0000269" key="6">
    <source>
    </source>
</evidence>
<evidence type="ECO:0000269" key="7">
    <source>
    </source>
</evidence>
<evidence type="ECO:0000269" key="8">
    <source>
    </source>
</evidence>
<evidence type="ECO:0000303" key="9">
    <source>
    </source>
</evidence>
<evidence type="ECO:0000305" key="10"/>
<evidence type="ECO:0007744" key="11">
    <source>
    </source>
</evidence>
<evidence type="ECO:0007744" key="12">
    <source>
    </source>
</evidence>
<evidence type="ECO:0007829" key="13">
    <source>
        <dbReference type="PDB" id="3L9Q"/>
    </source>
</evidence>
<evidence type="ECO:0007829" key="14">
    <source>
        <dbReference type="PDB" id="4BPW"/>
    </source>
</evidence>
<evidence type="ECO:0007829" key="15">
    <source>
        <dbReference type="PDB" id="4RR2"/>
    </source>
</evidence>
<evidence type="ECO:0007829" key="16">
    <source>
        <dbReference type="PDB" id="5F0Q"/>
    </source>
</evidence>
<evidence type="ECO:0007829" key="17">
    <source>
        <dbReference type="PDB" id="8D0B"/>
    </source>
</evidence>
<evidence type="ECO:0007829" key="18">
    <source>
        <dbReference type="PDB" id="8QJ7"/>
    </source>
</evidence>
<evidence type="ECO:0007829" key="19">
    <source>
        <dbReference type="PDB" id="8VY3"/>
    </source>
</evidence>
<evidence type="ECO:0007829" key="20">
    <source>
        <dbReference type="PDB" id="9C8V"/>
    </source>
</evidence>
<feature type="chain" id="PRO_0000046768" description="DNA primase large subunit">
    <location>
        <begin position="1"/>
        <end position="509"/>
    </location>
</feature>
<feature type="region of interest" description="Interdomain linker" evidence="6 7">
    <location>
        <begin position="253"/>
        <end position="270"/>
    </location>
</feature>
<feature type="region of interest" description="Interacts with PRIM1" evidence="4">
    <location>
        <begin position="266"/>
        <end position="509"/>
    </location>
</feature>
<feature type="region of interest" description="RNA:DNA duplex-binding" evidence="7">
    <location>
        <begin position="300"/>
        <end position="442"/>
    </location>
</feature>
<feature type="region of interest" description="Disordered" evidence="3">
    <location>
        <begin position="461"/>
        <end position="486"/>
    </location>
</feature>
<feature type="binding site" evidence="4 6 7">
    <location>
        <position position="287"/>
    </location>
    <ligand>
        <name>[4Fe-4S] cluster</name>
        <dbReference type="ChEBI" id="CHEBI:49883"/>
    </ligand>
</feature>
<feature type="binding site" evidence="4 6 7">
    <location>
        <position position="367"/>
    </location>
    <ligand>
        <name>[4Fe-4S] cluster</name>
        <dbReference type="ChEBI" id="CHEBI:49883"/>
    </ligand>
</feature>
<feature type="binding site" evidence="4 6">
    <location>
        <position position="384"/>
    </location>
    <ligand>
        <name>[4Fe-4S] cluster</name>
        <dbReference type="ChEBI" id="CHEBI:49883"/>
    </ligand>
</feature>
<feature type="binding site" evidence="4 6 7">
    <location>
        <position position="424"/>
    </location>
    <ligand>
        <name>[4Fe-4S] cluster</name>
        <dbReference type="ChEBI" id="CHEBI:49883"/>
    </ligand>
</feature>
<feature type="modified residue" description="Phosphothreonine" evidence="12">
    <location>
        <position position="470"/>
    </location>
</feature>
<feature type="splice variant" id="VSP_015111" description="In isoform 2." evidence="9">
    <original>ISDEE</original>
    <variation>VSIFL</variation>
    <location>
        <begin position="154"/>
        <end position="158"/>
    </location>
</feature>
<feature type="splice variant" id="VSP_015112" description="In isoform 2." evidence="9">
    <location>
        <begin position="159"/>
        <end position="509"/>
    </location>
</feature>
<feature type="sequence variant" id="VAR_059742" description="In dbSNP:rs5011403.">
    <original>E</original>
    <variation>K</variation>
    <location>
        <position position="181"/>
    </location>
</feature>
<feature type="sequence variant" id="VAR_059743" description="In dbSNP:rs6913546.">
    <original>D</original>
    <variation>G</variation>
    <location>
        <position position="204"/>
    </location>
</feature>
<feature type="sequence variant" id="VAR_059744" description="In dbSNP:rs927192.">
    <original>G</original>
    <variation>S</variation>
    <location>
        <position position="259"/>
    </location>
</feature>
<feature type="sequence variant" id="VAR_051506" description="In dbSNP:rs3763183.">
    <original>Q</original>
    <variation>L</variation>
    <location>
        <position position="265"/>
    </location>
</feature>
<feature type="sequence variant" id="VAR_059745" description="In dbSNP:rs9476080.">
    <original>C</original>
    <variation>Y</variation>
    <location>
        <position position="287"/>
    </location>
</feature>
<feature type="sequence variant" id="VAR_059747" description="In dbSNP:rs1777326961.">
    <original>Q</original>
    <variation>H</variation>
    <location>
        <position position="446"/>
    </location>
</feature>
<feature type="sequence variant" id="VAR_059748" description="In dbSNP:rs1419333837." evidence="11">
    <original>P</original>
    <variation>S</variation>
    <location>
        <position position="465"/>
    </location>
</feature>
<feature type="mutagenesis site" description="Decreases primase affinity for POLA1 by 10-fold." evidence="5">
    <original>R</original>
    <variation>A</variation>
    <location>
        <position position="97"/>
    </location>
</feature>
<feature type="mutagenesis site" description="Decreases primase affinity for POLA1 by 40-fold." evidence="5">
    <original>F</original>
    <variation>A</variation>
    <location>
        <position position="104"/>
    </location>
</feature>
<feature type="mutagenesis site" description="Decreases primase affinity for POLA1 by 30-fold." evidence="5">
    <original>R</original>
    <variation>A</variation>
    <location>
        <position position="107"/>
    </location>
</feature>
<feature type="mutagenesis site" description="Decreases primase affinity for POLA1 by 40-fold." evidence="5">
    <original>L</original>
    <variation>A</variation>
    <location>
        <position position="108"/>
    </location>
</feature>
<feature type="mutagenesis site" description="Decreases RNA primer di-nucleotide formation about 5-fold. Does not affect the ratio between the di-nucleotide and its extension products." evidence="6">
    <location>
        <begin position="256"/>
        <end position="270"/>
    </location>
</feature>
<feature type="sequence conflict" description="In Ref. 1; CAA52378." evidence="10" ref="1">
    <original>W</original>
    <variation>R</variation>
    <location>
        <position position="8"/>
    </location>
</feature>
<feature type="sequence conflict" description="In Ref. 1; CAA52378." evidence="10" ref="1">
    <original>I</original>
    <variation>T</variation>
    <location>
        <position position="40"/>
    </location>
</feature>
<feature type="sequence conflict" description="In Ref. 1; CAA52378." evidence="10" ref="1">
    <original>N</original>
    <variation>K</variation>
    <location>
        <position position="88"/>
    </location>
</feature>
<feature type="helix" evidence="17">
    <location>
        <begin position="17"/>
        <end position="21"/>
    </location>
</feature>
<feature type="strand" evidence="19">
    <location>
        <begin position="36"/>
        <end position="38"/>
    </location>
</feature>
<feature type="helix" evidence="15">
    <location>
        <begin position="39"/>
        <end position="61"/>
    </location>
</feature>
<feature type="helix" evidence="15">
    <location>
        <begin position="67"/>
        <end position="80"/>
    </location>
</feature>
<feature type="strand" evidence="18">
    <location>
        <begin position="86"/>
        <end position="88"/>
    </location>
</feature>
<feature type="helix" evidence="19">
    <location>
        <begin position="90"/>
        <end position="92"/>
    </location>
</feature>
<feature type="helix" evidence="15">
    <location>
        <begin position="96"/>
        <end position="110"/>
    </location>
</feature>
<feature type="strand" evidence="20">
    <location>
        <begin position="111"/>
        <end position="113"/>
    </location>
</feature>
<feature type="helix" evidence="15">
    <location>
        <begin position="114"/>
        <end position="134"/>
    </location>
</feature>
<feature type="helix" evidence="15">
    <location>
        <begin position="137"/>
        <end position="145"/>
    </location>
</feature>
<feature type="strand" evidence="15">
    <location>
        <begin position="146"/>
        <end position="148"/>
    </location>
</feature>
<feature type="helix" evidence="15">
    <location>
        <begin position="156"/>
        <end position="169"/>
    </location>
</feature>
<feature type="strand" evidence="15">
    <location>
        <begin position="170"/>
        <end position="172"/>
    </location>
</feature>
<feature type="strand" evidence="14">
    <location>
        <begin position="179"/>
        <end position="181"/>
    </location>
</feature>
<feature type="strand" evidence="15">
    <location>
        <begin position="183"/>
        <end position="187"/>
    </location>
</feature>
<feature type="helix" evidence="15">
    <location>
        <begin position="188"/>
        <end position="191"/>
    </location>
</feature>
<feature type="helix" evidence="15">
    <location>
        <begin position="192"/>
        <end position="195"/>
    </location>
</feature>
<feature type="turn" evidence="15">
    <location>
        <begin position="196"/>
        <end position="198"/>
    </location>
</feature>
<feature type="strand" evidence="15">
    <location>
        <begin position="200"/>
        <end position="210"/>
    </location>
</feature>
<feature type="helix" evidence="15">
    <location>
        <begin position="211"/>
        <end position="235"/>
    </location>
</feature>
<feature type="helix" evidence="15">
    <location>
        <begin position="238"/>
        <end position="241"/>
    </location>
</feature>
<feature type="turn" evidence="15">
    <location>
        <begin position="245"/>
        <end position="250"/>
    </location>
</feature>
<feature type="turn" evidence="15">
    <location>
        <begin position="252"/>
        <end position="255"/>
    </location>
</feature>
<feature type="helix" evidence="13">
    <location>
        <begin position="273"/>
        <end position="276"/>
    </location>
</feature>
<feature type="helix" evidence="13">
    <location>
        <begin position="277"/>
        <end position="283"/>
    </location>
</feature>
<feature type="helix" evidence="13">
    <location>
        <begin position="286"/>
        <end position="298"/>
    </location>
</feature>
<feature type="helix" evidence="13">
    <location>
        <begin position="303"/>
        <end position="316"/>
    </location>
</feature>
<feature type="strand" evidence="13">
    <location>
        <begin position="318"/>
        <end position="324"/>
    </location>
</feature>
<feature type="turn" evidence="16">
    <location>
        <begin position="333"/>
        <end position="335"/>
    </location>
</feature>
<feature type="helix" evidence="16">
    <location>
        <begin position="338"/>
        <end position="343"/>
    </location>
</feature>
<feature type="strand" evidence="13">
    <location>
        <begin position="345"/>
        <end position="351"/>
    </location>
</feature>
<feature type="strand" evidence="15">
    <location>
        <begin position="355"/>
        <end position="357"/>
    </location>
</feature>
<feature type="strand" evidence="19">
    <location>
        <begin position="359"/>
        <end position="363"/>
    </location>
</feature>
<feature type="helix" evidence="13">
    <location>
        <begin position="367"/>
        <end position="372"/>
    </location>
</feature>
<feature type="helix" evidence="13">
    <location>
        <begin position="385"/>
        <end position="388"/>
    </location>
</feature>
<feature type="helix" evidence="13">
    <location>
        <begin position="391"/>
        <end position="400"/>
    </location>
</feature>
<feature type="helix" evidence="13">
    <location>
        <begin position="405"/>
        <end position="416"/>
    </location>
</feature>
<feature type="helix" evidence="13">
    <location>
        <begin position="420"/>
        <end position="432"/>
    </location>
</feature>
<feature type="helix" evidence="13">
    <location>
        <begin position="444"/>
        <end position="455"/>
    </location>
</feature>
<comment type="function">
    <text evidence="1 2 4 6 7 8">Regulatory subunit of the DNA primase complex and component of the DNA polymerase alpha complex (also known as the alpha DNA polymerase-primase complex) which play an essential role in the initiation of DNA synthesis (PubMed:17893144, PubMed:25550159, PubMed:26975377, PubMed:9705292). During the S phase of the cell cycle, the DNA polymerase alpha complex (composed of a catalytic subunit POLA1, an accessory subunit POLA2 and two primase subunits, the catalytic subunit PRIM1 and the regulatory subunit PRIM2) is recruited to DNA at the replicative forks via direct interactions with MCM10 and WDHD1 (By similarity). The primase subunit of the polymerase alpha complex initiates DNA synthesis by oligomerising short RNA primers on both leading and lagging strands (PubMed:17893144). These primers are initially extended by the polymerase alpha catalytic subunit and subsequently transferred to polymerase delta and polymerase epsilon for processive synthesis on the lagging and leading strand, respectively (By similarity). In the primase complex, both subunits are necessary for the initial di-nucleotide formation, but the extension of the primer depends only on the catalytic subunit (PubMed:17893144, PubMed:25550159). Binds RNA:DNA duplex and coordinates the catalytic activities of PRIM1 and POLA2 during primase-to-polymerase switch.</text>
</comment>
<comment type="cofactor">
    <cofactor evidence="4 6">
        <name>[4Fe-4S] cluster</name>
        <dbReference type="ChEBI" id="CHEBI:49883"/>
    </cofactor>
    <text evidence="4 6">Binds 1 [4Fe-4S] cluster.</text>
</comment>
<comment type="subunit">
    <text evidence="2 4 5 8">Heterodimer of a catalytic subunit PRIM1 and a regulatory subunit PRIM2, also known as the DNA primase complex (PubMed:17893144, PubMed:9705292). Interacts via (C-terminus) with PRIM1 (PubMed:17893144). Component of the alpha DNA polymerase complex (also known as the alpha DNA polymerase-primase complex) consisting of four subunits: the catalytic subunit POLA1, the regulatory subunit POLA2, and the primase complex subunits PRIM1 and PRIM2 respectively (PubMed:26975377, PubMed:9705292). Within the complex, POLA1 directly interacts with PRIM2.</text>
</comment>
<comment type="interaction">
    <interactant intactId="EBI-850004">
        <id>P49643</id>
    </interactant>
    <interactant intactId="EBI-726050">
        <id>P49642</id>
        <label>PRIM1</label>
    </interactant>
    <organismsDiffer>false</organismsDiffer>
    <experiments>8</experiments>
</comment>
<comment type="interaction">
    <interactant intactId="EBI-850004">
        <id>P49643</id>
    </interactant>
    <interactant intactId="EBI-10253121">
        <id>Q6P9E2</id>
        <label>RECK</label>
    </interactant>
    <organismsDiffer>false</organismsDiffer>
    <experiments>3</experiments>
</comment>
<comment type="interaction">
    <interactant intactId="EBI-850004">
        <id>P49643</id>
    </interactant>
    <interactant intactId="EBI-5235340">
        <id>Q7Z699</id>
        <label>SPRED1</label>
    </interactant>
    <organismsDiffer>false</organismsDiffer>
    <experiments>3</experiments>
</comment>
<comment type="interaction">
    <interactant intactId="EBI-15866483">
        <id>P49643-1</id>
    </interactant>
    <interactant intactId="EBI-621404">
        <id>P15927</id>
        <label>RPA2</label>
    </interactant>
    <organismsDiffer>false</organismsDiffer>
    <experiments>3</experiments>
</comment>
<comment type="alternative products">
    <event type="alternative splicing"/>
    <isoform>
        <id>P49643-1</id>
        <name>1</name>
        <sequence type="displayed"/>
    </isoform>
    <isoform>
        <id>P49643-2</id>
        <name>2</name>
        <sequence type="described" ref="VSP_015111 VSP_015112"/>
    </isoform>
</comment>
<comment type="domain">
    <text evidence="7">The RNA:DNA duplex-binding domain interacts with the template phosphates at positions -2, -1, 1, and 2 positioning its bases -1, 1, and 2 for duplex formation. Interacts only with the beta- and gamma-phosphates of triphosphate moiety of initiating NTP of the primer. The side chain of His-303 mimics a RNA base that would be paired with the template nucleotide at position -1 via a hydrogen bond, thereby facilitating the stacking of the initiating NTP. In the initiating primosome a 'mini RNA:DNA' duplex is formed comprising three template nucleotides at positions -1, 1, and 2 on one strand and His-303, initiating NTP, and incoming NTP on the other strand.</text>
</comment>
<comment type="domain">
    <text evidence="6 7">The interdomain linker provides flexibility in movement relative to primosome platform composed of PRIM1, the N-terminus of PRIM2, the C-terminus of POLA1 and POLA2. Together with POLA1 interdomain linker, allows for large-scale conformational changes of primosome and coordinated autoregulation of catalytic centers of PRIM1 and POLA1. It is proposed to move the C-terminus of PRIM2 close to PRIM1 during initiation, then move it away with the 5'-end of the nascent primer during elongation. The steric hindrance between the N- and C-terminus of PRIM2 as the RNA primer is elongated limits its length to 9 nucleotides. Ultimately a large rotation of the C-terminus of PRIM2 transfers the primer to POLA1 active site for DNA synthesis.</text>
</comment>
<comment type="similarity">
    <text evidence="10">Belongs to the eukaryotic-type primase large subunit family.</text>
</comment>
<organism>
    <name type="scientific">Homo sapiens</name>
    <name type="common">Human</name>
    <dbReference type="NCBI Taxonomy" id="9606"/>
    <lineage>
        <taxon>Eukaryota</taxon>
        <taxon>Metazoa</taxon>
        <taxon>Chordata</taxon>
        <taxon>Craniata</taxon>
        <taxon>Vertebrata</taxon>
        <taxon>Euteleostomi</taxon>
        <taxon>Mammalia</taxon>
        <taxon>Eutheria</taxon>
        <taxon>Euarchontoglires</taxon>
        <taxon>Primates</taxon>
        <taxon>Haplorrhini</taxon>
        <taxon>Catarrhini</taxon>
        <taxon>Hominidae</taxon>
        <taxon>Homo</taxon>
    </lineage>
</organism>
<dbReference type="EMBL" id="X74331">
    <property type="protein sequence ID" value="CAA52378.1"/>
    <property type="molecule type" value="mRNA"/>
</dbReference>
<dbReference type="EMBL" id="AL121975">
    <property type="status" value="NOT_ANNOTATED_CDS"/>
    <property type="molecule type" value="Genomic_DNA"/>
</dbReference>
<dbReference type="EMBL" id="AL162579">
    <property type="status" value="NOT_ANNOTATED_CDS"/>
    <property type="molecule type" value="Genomic_DNA"/>
</dbReference>
<dbReference type="EMBL" id="BC017833">
    <property type="protein sequence ID" value="AAH17833.1"/>
    <property type="molecule type" value="mRNA"/>
</dbReference>
<dbReference type="EMBL" id="BC064931">
    <property type="protein sequence ID" value="AAH64931.1"/>
    <property type="molecule type" value="mRNA"/>
</dbReference>
<dbReference type="CCDS" id="CCDS75476.1">
    <molecule id="P49643-1"/>
</dbReference>
<dbReference type="CCDS" id="CCDS75477.1">
    <molecule id="P49643-2"/>
</dbReference>
<dbReference type="PIR" id="S45631">
    <property type="entry name" value="S45631"/>
</dbReference>
<dbReference type="RefSeq" id="NP_000938.2">
    <molecule id="P49643-1"/>
    <property type="nucleotide sequence ID" value="NM_000947.4"/>
</dbReference>
<dbReference type="RefSeq" id="NP_001269416.1">
    <molecule id="P49643-2"/>
    <property type="nucleotide sequence ID" value="NM_001282487.2"/>
</dbReference>
<dbReference type="RefSeq" id="NP_001269417.1">
    <molecule id="P49643-2"/>
    <property type="nucleotide sequence ID" value="NM_001282488.2"/>
</dbReference>
<dbReference type="RefSeq" id="XP_047274943.1">
    <molecule id="P49643-1"/>
    <property type="nucleotide sequence ID" value="XM_047418987.1"/>
</dbReference>
<dbReference type="RefSeq" id="XP_054211783.1">
    <molecule id="P49643-1"/>
    <property type="nucleotide sequence ID" value="XM_054355808.1"/>
</dbReference>
<dbReference type="PDB" id="3L9Q">
    <property type="method" value="X-ray"/>
    <property type="resolution" value="1.70 A"/>
    <property type="chains" value="A/B=272-464"/>
</dbReference>
<dbReference type="PDB" id="3Q36">
    <property type="method" value="X-ray"/>
    <property type="resolution" value="2.50 A"/>
    <property type="chains" value="A/B=266-457"/>
</dbReference>
<dbReference type="PDB" id="4BPU">
    <property type="method" value="X-ray"/>
    <property type="resolution" value="2.70 A"/>
    <property type="chains" value="B/D=1-253"/>
</dbReference>
<dbReference type="PDB" id="4BPW">
    <property type="method" value="X-ray"/>
    <property type="resolution" value="3.00 A"/>
    <property type="chains" value="B/D=1-253"/>
</dbReference>
<dbReference type="PDB" id="4BPX">
    <property type="method" value="X-ray"/>
    <property type="resolution" value="3.40 A"/>
    <property type="chains" value="B/D=19-253"/>
</dbReference>
<dbReference type="PDB" id="4RR2">
    <property type="method" value="X-ray"/>
    <property type="resolution" value="2.65 A"/>
    <property type="chains" value="B/D=1-509"/>
</dbReference>
<dbReference type="PDB" id="5DQO">
    <property type="method" value="X-ray"/>
    <property type="resolution" value="2.30 A"/>
    <property type="chains" value="A/B/C/D=272-464"/>
</dbReference>
<dbReference type="PDB" id="5EXR">
    <property type="method" value="X-ray"/>
    <property type="resolution" value="3.60 A"/>
    <property type="chains" value="B/F=1-509"/>
</dbReference>
<dbReference type="PDB" id="5F0Q">
    <property type="method" value="X-ray"/>
    <property type="resolution" value="2.21 A"/>
    <property type="chains" value="A/B=266-456"/>
</dbReference>
<dbReference type="PDB" id="5F0S">
    <property type="method" value="X-ray"/>
    <property type="resolution" value="3.00 A"/>
    <property type="chains" value="A/B=266-456"/>
</dbReference>
<dbReference type="PDB" id="5I7M">
    <property type="method" value="X-ray"/>
    <property type="resolution" value="1.93 A"/>
    <property type="chains" value="A/B=272-457"/>
</dbReference>
<dbReference type="PDB" id="6DHW">
    <property type="method" value="X-ray"/>
    <property type="resolution" value="2.01 A"/>
    <property type="chains" value="A/B=266-457"/>
</dbReference>
<dbReference type="PDB" id="7OPL">
    <property type="method" value="EM"/>
    <property type="resolution" value="4.12 A"/>
    <property type="chains" value="D=1-509"/>
</dbReference>
<dbReference type="PDB" id="7U5C">
    <property type="method" value="EM"/>
    <property type="resolution" value="4.60 A"/>
    <property type="chains" value="B=1-509"/>
</dbReference>
<dbReference type="PDB" id="8B9D">
    <property type="method" value="EM"/>
    <property type="resolution" value="3.40 A"/>
    <property type="chains" value="P=1-509"/>
</dbReference>
<dbReference type="PDB" id="8D0B">
    <property type="method" value="EM"/>
    <property type="resolution" value="3.43 A"/>
    <property type="chains" value="E=16-256"/>
</dbReference>
<dbReference type="PDB" id="8D0K">
    <property type="method" value="EM"/>
    <property type="resolution" value="4.27 A"/>
    <property type="chains" value="E=2-509"/>
</dbReference>
<dbReference type="PDB" id="8D96">
    <property type="method" value="EM"/>
    <property type="resolution" value="3.35 A"/>
    <property type="chains" value="B=1-509"/>
</dbReference>
<dbReference type="PDB" id="8D9D">
    <property type="method" value="EM"/>
    <property type="resolution" value="3.59 A"/>
    <property type="chains" value="B=1-509"/>
</dbReference>
<dbReference type="PDB" id="8QJ7">
    <property type="method" value="EM"/>
    <property type="resolution" value="3.07 A"/>
    <property type="chains" value="D=1-509"/>
</dbReference>
<dbReference type="PDB" id="8VY3">
    <property type="method" value="EM"/>
    <property type="resolution" value="2.98 A"/>
    <property type="chains" value="B=22-455"/>
</dbReference>
<dbReference type="PDB" id="9C8V">
    <property type="method" value="EM"/>
    <property type="resolution" value="3.39 A"/>
    <property type="chains" value="B=22-455"/>
</dbReference>
<dbReference type="PDBsum" id="3L9Q"/>
<dbReference type="PDBsum" id="3Q36"/>
<dbReference type="PDBsum" id="4BPU"/>
<dbReference type="PDBsum" id="4BPW"/>
<dbReference type="PDBsum" id="4BPX"/>
<dbReference type="PDBsum" id="4RR2"/>
<dbReference type="PDBsum" id="5DQO"/>
<dbReference type="PDBsum" id="5EXR"/>
<dbReference type="PDBsum" id="5F0Q"/>
<dbReference type="PDBsum" id="5F0S"/>
<dbReference type="PDBsum" id="5I7M"/>
<dbReference type="PDBsum" id="6DHW"/>
<dbReference type="PDBsum" id="7OPL"/>
<dbReference type="PDBsum" id="7U5C"/>
<dbReference type="PDBsum" id="8B9D"/>
<dbReference type="PDBsum" id="8D0B"/>
<dbReference type="PDBsum" id="8D0K"/>
<dbReference type="PDBsum" id="8D96"/>
<dbReference type="PDBsum" id="8D9D"/>
<dbReference type="PDBsum" id="8QJ7"/>
<dbReference type="PDBsum" id="8VY3"/>
<dbReference type="PDBsum" id="9C8V"/>
<dbReference type="EMDB" id="EMD-13020"/>
<dbReference type="EMDB" id="EMD-26346"/>
<dbReference type="EMDB" id="EMD-26347"/>
<dbReference type="EMDB" id="EMD-27104"/>
<dbReference type="EMDB" id="EMD-27107"/>
<dbReference type="EMDB" id="EMD-27256"/>
<dbReference type="EMDB" id="EMD-27258"/>
<dbReference type="EMDB" id="EMD-42033"/>
<dbReference type="EMDB" id="EMD-42034"/>
<dbReference type="EMDB" id="EMD-42035"/>
<dbReference type="EMDB" id="EMD-42036"/>
<dbReference type="EMDB" id="EMD-42037"/>
<dbReference type="SASBDB" id="P49643"/>
<dbReference type="SMR" id="P49643"/>
<dbReference type="BioGRID" id="111548">
    <property type="interactions" value="142"/>
</dbReference>
<dbReference type="ComplexPortal" id="CPX-2087">
    <property type="entry name" value="DNA polymerase alpha:primase complex"/>
</dbReference>
<dbReference type="CORUM" id="P49643"/>
<dbReference type="DIP" id="DIP-36438N"/>
<dbReference type="FunCoup" id="P49643">
    <property type="interactions" value="2172"/>
</dbReference>
<dbReference type="IntAct" id="P49643">
    <property type="interactions" value="56"/>
</dbReference>
<dbReference type="MINT" id="P49643"/>
<dbReference type="STRING" id="9606.ENSP00000484105"/>
<dbReference type="ChEMBL" id="CHEMBL2363042"/>
<dbReference type="GlyGen" id="P49643">
    <property type="glycosylation" value="1 site, 1 O-linked glycan (1 site)"/>
</dbReference>
<dbReference type="iPTMnet" id="P49643"/>
<dbReference type="PhosphoSitePlus" id="P49643"/>
<dbReference type="BioMuta" id="PRIM2"/>
<dbReference type="DMDM" id="51338777"/>
<dbReference type="jPOST" id="P49643"/>
<dbReference type="MassIVE" id="P49643"/>
<dbReference type="PaxDb" id="9606-ENSP00000484105"/>
<dbReference type="PeptideAtlas" id="P49643"/>
<dbReference type="ProteomicsDB" id="56041">
    <molecule id="P49643-1"/>
</dbReference>
<dbReference type="ProteomicsDB" id="56042">
    <molecule id="P49643-2"/>
</dbReference>
<dbReference type="Pumba" id="P49643"/>
<dbReference type="Antibodypedia" id="31147">
    <property type="antibodies" value="157 antibodies from 26 providers"/>
</dbReference>
<dbReference type="DNASU" id="5558"/>
<dbReference type="Ensembl" id="ENST00000274891.10">
    <molecule id="P49643-2"/>
    <property type="protein sequence ID" value="ENSP00000485304.1"/>
    <property type="gene ID" value="ENSG00000146143.19"/>
</dbReference>
<dbReference type="Ensembl" id="ENST00000370687.6">
    <molecule id="P49643-2"/>
    <property type="protein sequence ID" value="ENSP00000483201.1"/>
    <property type="gene ID" value="ENSG00000146143.19"/>
</dbReference>
<dbReference type="Ensembl" id="ENST00000615550.5">
    <molecule id="P49643-1"/>
    <property type="protein sequence ID" value="ENSP00000484105.1"/>
    <property type="gene ID" value="ENSG00000146143.19"/>
</dbReference>
<dbReference type="GeneID" id="5558"/>
<dbReference type="KEGG" id="hsa:5558"/>
<dbReference type="MANE-Select" id="ENST00000615550.5">
    <property type="protein sequence ID" value="ENSP00000484105.1"/>
    <property type="RefSeq nucleotide sequence ID" value="NM_000947.5"/>
    <property type="RefSeq protein sequence ID" value="NP_000938.2"/>
</dbReference>
<dbReference type="UCSC" id="uc003pdv.3">
    <molecule id="P49643-1"/>
    <property type="organism name" value="human"/>
</dbReference>
<dbReference type="AGR" id="HGNC:9370"/>
<dbReference type="CTD" id="5558"/>
<dbReference type="DisGeNET" id="5558"/>
<dbReference type="GeneCards" id="PRIM2"/>
<dbReference type="HGNC" id="HGNC:9370">
    <property type="gene designation" value="PRIM2"/>
</dbReference>
<dbReference type="HPA" id="ENSG00000146143">
    <property type="expression patterns" value="Tissue enhanced (prostate)"/>
</dbReference>
<dbReference type="MIM" id="176636">
    <property type="type" value="gene"/>
</dbReference>
<dbReference type="neXtProt" id="NX_P49643"/>
<dbReference type="OpenTargets" id="ENSG00000146143"/>
<dbReference type="PharmGKB" id="PA162400108"/>
<dbReference type="VEuPathDB" id="HostDB:ENSG00000146143"/>
<dbReference type="eggNOG" id="KOG2267">
    <property type="taxonomic scope" value="Eukaryota"/>
</dbReference>
<dbReference type="GeneTree" id="ENSGT00390000009790"/>
<dbReference type="HOGENOM" id="CLU_118849_0_0_1"/>
<dbReference type="InParanoid" id="P49643"/>
<dbReference type="OMA" id="RINYKPW"/>
<dbReference type="OrthoDB" id="421393at2759"/>
<dbReference type="PAN-GO" id="P49643">
    <property type="GO annotations" value="1 GO annotation based on evolutionary models"/>
</dbReference>
<dbReference type="PhylomeDB" id="P49643"/>
<dbReference type="BRENDA" id="2.7.7.102">
    <property type="organism ID" value="2681"/>
</dbReference>
<dbReference type="PathwayCommons" id="P49643"/>
<dbReference type="Reactome" id="R-HSA-113501">
    <property type="pathway name" value="Inhibition of replication initiation of damaged DNA by RB1/E2F1"/>
</dbReference>
<dbReference type="Reactome" id="R-HSA-174411">
    <property type="pathway name" value="Polymerase switching on the C-strand of the telomere"/>
</dbReference>
<dbReference type="Reactome" id="R-HSA-174430">
    <property type="pathway name" value="Telomere C-strand synthesis initiation"/>
</dbReference>
<dbReference type="Reactome" id="R-HSA-68952">
    <property type="pathway name" value="DNA replication initiation"/>
</dbReference>
<dbReference type="Reactome" id="R-HSA-68962">
    <property type="pathway name" value="Activation of the pre-replicative complex"/>
</dbReference>
<dbReference type="Reactome" id="R-HSA-69091">
    <property type="pathway name" value="Polymerase switching"/>
</dbReference>
<dbReference type="Reactome" id="R-HSA-69166">
    <property type="pathway name" value="Removal of the Flap Intermediate"/>
</dbReference>
<dbReference type="Reactome" id="R-HSA-69183">
    <property type="pathway name" value="Processive synthesis on the lagging strand"/>
</dbReference>
<dbReference type="Reactome" id="R-HSA-9710421">
    <property type="pathway name" value="Defective pyroptosis"/>
</dbReference>
<dbReference type="SignaLink" id="P49643"/>
<dbReference type="SIGNOR" id="P49643"/>
<dbReference type="BioGRID-ORCS" id="5558">
    <property type="hits" value="53 hits in 302 CRISPR screens"/>
</dbReference>
<dbReference type="ChiTaRS" id="PRIM2">
    <property type="organism name" value="human"/>
</dbReference>
<dbReference type="EvolutionaryTrace" id="P49643"/>
<dbReference type="GeneWiki" id="PRIM2"/>
<dbReference type="GenomeRNAi" id="5558"/>
<dbReference type="Pharos" id="P49643">
    <property type="development level" value="Tbio"/>
</dbReference>
<dbReference type="PRO" id="PR:P49643"/>
<dbReference type="Proteomes" id="UP000005640">
    <property type="component" value="Chromosome 6"/>
</dbReference>
<dbReference type="RNAct" id="P49643">
    <property type="molecule type" value="protein"/>
</dbReference>
<dbReference type="Bgee" id="ENSG00000146143">
    <property type="expression patterns" value="Expressed in buccal mucosa cell and 108 other cell types or tissues"/>
</dbReference>
<dbReference type="ExpressionAtlas" id="P49643">
    <property type="expression patterns" value="baseline and differential"/>
</dbReference>
<dbReference type="GO" id="GO:0005658">
    <property type="term" value="C:alpha DNA polymerase:primase complex"/>
    <property type="evidence" value="ECO:0000314"/>
    <property type="project" value="UniProtKB"/>
</dbReference>
<dbReference type="GO" id="GO:0005654">
    <property type="term" value="C:nucleoplasm"/>
    <property type="evidence" value="ECO:0000304"/>
    <property type="project" value="Reactome"/>
</dbReference>
<dbReference type="GO" id="GO:0051539">
    <property type="term" value="F:4 iron, 4 sulfur cluster binding"/>
    <property type="evidence" value="ECO:0000314"/>
    <property type="project" value="UniProtKB"/>
</dbReference>
<dbReference type="GO" id="GO:0003677">
    <property type="term" value="F:DNA binding"/>
    <property type="evidence" value="ECO:0007669"/>
    <property type="project" value="UniProtKB-KW"/>
</dbReference>
<dbReference type="GO" id="GO:0071667">
    <property type="term" value="F:DNA/RNA hybrid binding"/>
    <property type="evidence" value="ECO:0000314"/>
    <property type="project" value="UniProtKB"/>
</dbReference>
<dbReference type="GO" id="GO:0046872">
    <property type="term" value="F:metal ion binding"/>
    <property type="evidence" value="ECO:0007669"/>
    <property type="project" value="UniProtKB-KW"/>
</dbReference>
<dbReference type="GO" id="GO:0006270">
    <property type="term" value="P:DNA replication initiation"/>
    <property type="evidence" value="ECO:0000314"/>
    <property type="project" value="ComplexPortal"/>
</dbReference>
<dbReference type="GO" id="GO:0006269">
    <property type="term" value="P:DNA replication, synthesis of primer"/>
    <property type="evidence" value="ECO:0000314"/>
    <property type="project" value="UniProtKB"/>
</dbReference>
<dbReference type="CDD" id="cd07322">
    <property type="entry name" value="PriL_PriS_Eukaryotic"/>
    <property type="match status" value="1"/>
</dbReference>
<dbReference type="FunFam" id="1.20.930.80:FF:000001">
    <property type="entry name" value="DNA primase large subunit"/>
    <property type="match status" value="1"/>
</dbReference>
<dbReference type="Gene3D" id="1.20.930.80">
    <property type="match status" value="1"/>
</dbReference>
<dbReference type="InterPro" id="IPR016558">
    <property type="entry name" value="DNA_primase_lsu_euk"/>
</dbReference>
<dbReference type="InterPro" id="IPR007238">
    <property type="entry name" value="DNA_primase_lsu_euk/arc"/>
</dbReference>
<dbReference type="PANTHER" id="PTHR10537">
    <property type="entry name" value="DNA PRIMASE LARGE SUBUNIT"/>
    <property type="match status" value="1"/>
</dbReference>
<dbReference type="PANTHER" id="PTHR10537:SF3">
    <property type="entry name" value="DNA PRIMASE LARGE SUBUNIT"/>
    <property type="match status" value="1"/>
</dbReference>
<dbReference type="Pfam" id="PF04104">
    <property type="entry name" value="DNA_primase_lrg"/>
    <property type="match status" value="1"/>
</dbReference>
<dbReference type="PIRSF" id="PIRSF009449">
    <property type="entry name" value="DNA_primase_large_subunit"/>
    <property type="match status" value="1"/>
</dbReference>
<dbReference type="SUPFAM" id="SSF140914">
    <property type="entry name" value="PriB N-terminal domain-like"/>
    <property type="match status" value="1"/>
</dbReference>
<sequence>MEFSGRKWRKLRLAGDQRNASYPHCLQFYLQPPSENISLIEFENLAIDRVKLLKSVENLGVSYVKGTEQYQSKLESELRKLKFSYRENLEDEYEPRRRDHISHFILRLAYCQSEELRRWFIQQEMDLLRFRFSILPKDKIQDFLKDSQLQFEAISDEEKTLREQEIVASSPSLSGLKLGFESIYKIPFADALDLFRGRKVYLEDGFAYVPLKDIVAIILNEFRAKLSKALALTARSLPAVQSDERLQPLLNHLSHSYTGQDYSTQGNVGKISLDQIDLLSTKSFPPCMRQLHKALRENHHLRHGGRMQYGLFLKGIGLTLEQALQFWKQEFIKGKMDPDKFDKGYSYNIRHSFGKEGKRTDYTPFSCLKIILSNPPSQGDYHGCPFRHSDPELLKQKLQSYKISPGGISQILDLVKGTHYQVACQKYFEMIHNVDDCGFSLNHPNQFFCESQRILNGGKDIKKEPIQPETPQPKPSVQKTKDASSALASLNSSLEMDMEGLEDYFSEDS</sequence>
<keyword id="KW-0002">3D-structure</keyword>
<keyword id="KW-0004">4Fe-4S</keyword>
<keyword id="KW-0025">Alternative splicing</keyword>
<keyword id="KW-0235">DNA replication</keyword>
<keyword id="KW-0238">DNA-binding</keyword>
<keyword id="KW-0408">Iron</keyword>
<keyword id="KW-0411">Iron-sulfur</keyword>
<keyword id="KW-0479">Metal-binding</keyword>
<keyword id="KW-0597">Phosphoprotein</keyword>
<keyword id="KW-0639">Primosome</keyword>
<keyword id="KW-1267">Proteomics identification</keyword>
<keyword id="KW-1185">Reference proteome</keyword>
<protein>
    <recommendedName>
        <fullName>DNA primase large subunit</fullName>
    </recommendedName>
    <alternativeName>
        <fullName>DNA primase 58 kDa subunit</fullName>
        <shortName>p58</shortName>
    </alternativeName>
</protein>
<proteinExistence type="evidence at protein level"/>